<reference key="1">
    <citation type="submission" date="2008-04" db="EMBL/GenBank/DDBJ databases">
        <title>Complete sequence of chromosome of Natranaerobius thermophilus JW/NM-WN-LF.</title>
        <authorList>
            <consortium name="US DOE Joint Genome Institute"/>
            <person name="Copeland A."/>
            <person name="Lucas S."/>
            <person name="Lapidus A."/>
            <person name="Glavina del Rio T."/>
            <person name="Dalin E."/>
            <person name="Tice H."/>
            <person name="Bruce D."/>
            <person name="Goodwin L."/>
            <person name="Pitluck S."/>
            <person name="Chertkov O."/>
            <person name="Brettin T."/>
            <person name="Detter J.C."/>
            <person name="Han C."/>
            <person name="Kuske C.R."/>
            <person name="Schmutz J."/>
            <person name="Larimer F."/>
            <person name="Land M."/>
            <person name="Hauser L."/>
            <person name="Kyrpides N."/>
            <person name="Lykidis A."/>
            <person name="Mesbah N.M."/>
            <person name="Wiegel J."/>
        </authorList>
    </citation>
    <scope>NUCLEOTIDE SEQUENCE [LARGE SCALE GENOMIC DNA]</scope>
    <source>
        <strain>ATCC BAA-1301 / DSM 18059 / JW/NM-WN-LF</strain>
    </source>
</reference>
<comment type="function">
    <text evidence="1">Together with the chaperonin GroEL, plays an essential role in assisting protein folding. The GroEL-GroES system forms a nano-cage that allows encapsulation of the non-native substrate proteins and provides a physical environment optimized to promote and accelerate protein folding. GroES binds to the apical surface of the GroEL ring, thereby capping the opening of the GroEL channel.</text>
</comment>
<comment type="subunit">
    <text evidence="1">Heptamer of 7 subunits arranged in a ring. Interacts with the chaperonin GroEL.</text>
</comment>
<comment type="subcellular location">
    <subcellularLocation>
        <location evidence="1">Cytoplasm</location>
    </subcellularLocation>
</comment>
<comment type="similarity">
    <text evidence="1">Belongs to the GroES chaperonin family.</text>
</comment>
<keyword id="KW-0143">Chaperone</keyword>
<keyword id="KW-0963">Cytoplasm</keyword>
<keyword id="KW-1185">Reference proteome</keyword>
<dbReference type="EMBL" id="CP001034">
    <property type="protein sequence ID" value="ACB84045.1"/>
    <property type="molecule type" value="Genomic_DNA"/>
</dbReference>
<dbReference type="RefSeq" id="WP_012446932.1">
    <property type="nucleotide sequence ID" value="NC_010718.1"/>
</dbReference>
<dbReference type="SMR" id="B2A5V2"/>
<dbReference type="FunCoup" id="B2A5V2">
    <property type="interactions" value="356"/>
</dbReference>
<dbReference type="STRING" id="457570.Nther_0449"/>
<dbReference type="KEGG" id="nth:Nther_0449"/>
<dbReference type="eggNOG" id="COG0234">
    <property type="taxonomic scope" value="Bacteria"/>
</dbReference>
<dbReference type="HOGENOM" id="CLU_132825_2_0_9"/>
<dbReference type="InParanoid" id="B2A5V2"/>
<dbReference type="OrthoDB" id="9806791at2"/>
<dbReference type="Proteomes" id="UP000001683">
    <property type="component" value="Chromosome"/>
</dbReference>
<dbReference type="GO" id="GO:0005737">
    <property type="term" value="C:cytoplasm"/>
    <property type="evidence" value="ECO:0007669"/>
    <property type="project" value="UniProtKB-SubCell"/>
</dbReference>
<dbReference type="GO" id="GO:0005524">
    <property type="term" value="F:ATP binding"/>
    <property type="evidence" value="ECO:0007669"/>
    <property type="project" value="InterPro"/>
</dbReference>
<dbReference type="GO" id="GO:0046872">
    <property type="term" value="F:metal ion binding"/>
    <property type="evidence" value="ECO:0007669"/>
    <property type="project" value="TreeGrafter"/>
</dbReference>
<dbReference type="GO" id="GO:0044183">
    <property type="term" value="F:protein folding chaperone"/>
    <property type="evidence" value="ECO:0007669"/>
    <property type="project" value="InterPro"/>
</dbReference>
<dbReference type="GO" id="GO:0051087">
    <property type="term" value="F:protein-folding chaperone binding"/>
    <property type="evidence" value="ECO:0007669"/>
    <property type="project" value="TreeGrafter"/>
</dbReference>
<dbReference type="GO" id="GO:0051082">
    <property type="term" value="F:unfolded protein binding"/>
    <property type="evidence" value="ECO:0007669"/>
    <property type="project" value="TreeGrafter"/>
</dbReference>
<dbReference type="GO" id="GO:0051085">
    <property type="term" value="P:chaperone cofactor-dependent protein refolding"/>
    <property type="evidence" value="ECO:0007669"/>
    <property type="project" value="TreeGrafter"/>
</dbReference>
<dbReference type="CDD" id="cd00320">
    <property type="entry name" value="cpn10"/>
    <property type="match status" value="1"/>
</dbReference>
<dbReference type="FunFam" id="2.30.33.40:FF:000001">
    <property type="entry name" value="10 kDa chaperonin"/>
    <property type="match status" value="1"/>
</dbReference>
<dbReference type="Gene3D" id="2.30.33.40">
    <property type="entry name" value="GroES chaperonin"/>
    <property type="match status" value="1"/>
</dbReference>
<dbReference type="HAMAP" id="MF_00580">
    <property type="entry name" value="CH10"/>
    <property type="match status" value="1"/>
</dbReference>
<dbReference type="InterPro" id="IPR020818">
    <property type="entry name" value="Chaperonin_GroES"/>
</dbReference>
<dbReference type="InterPro" id="IPR037124">
    <property type="entry name" value="Chaperonin_GroES_sf"/>
</dbReference>
<dbReference type="InterPro" id="IPR018369">
    <property type="entry name" value="Chaprnonin_Cpn10_CS"/>
</dbReference>
<dbReference type="InterPro" id="IPR011032">
    <property type="entry name" value="GroES-like_sf"/>
</dbReference>
<dbReference type="NCBIfam" id="NF001527">
    <property type="entry name" value="PRK00364.1-2"/>
    <property type="match status" value="1"/>
</dbReference>
<dbReference type="NCBIfam" id="NF001531">
    <property type="entry name" value="PRK00364.2-2"/>
    <property type="match status" value="1"/>
</dbReference>
<dbReference type="NCBIfam" id="NF001533">
    <property type="entry name" value="PRK00364.2-4"/>
    <property type="match status" value="1"/>
</dbReference>
<dbReference type="NCBIfam" id="NF001534">
    <property type="entry name" value="PRK00364.2-5"/>
    <property type="match status" value="1"/>
</dbReference>
<dbReference type="PANTHER" id="PTHR10772">
    <property type="entry name" value="10 KDA HEAT SHOCK PROTEIN"/>
    <property type="match status" value="1"/>
</dbReference>
<dbReference type="PANTHER" id="PTHR10772:SF58">
    <property type="entry name" value="CO-CHAPERONIN GROES"/>
    <property type="match status" value="1"/>
</dbReference>
<dbReference type="Pfam" id="PF00166">
    <property type="entry name" value="Cpn10"/>
    <property type="match status" value="1"/>
</dbReference>
<dbReference type="PRINTS" id="PR00297">
    <property type="entry name" value="CHAPERONIN10"/>
</dbReference>
<dbReference type="SMART" id="SM00883">
    <property type="entry name" value="Cpn10"/>
    <property type="match status" value="1"/>
</dbReference>
<dbReference type="SUPFAM" id="SSF50129">
    <property type="entry name" value="GroES-like"/>
    <property type="match status" value="1"/>
</dbReference>
<dbReference type="PROSITE" id="PS00681">
    <property type="entry name" value="CHAPERONINS_CPN10"/>
    <property type="match status" value="1"/>
</dbReference>
<evidence type="ECO:0000255" key="1">
    <source>
        <dbReference type="HAMAP-Rule" id="MF_00580"/>
    </source>
</evidence>
<evidence type="ECO:0000256" key="2">
    <source>
        <dbReference type="SAM" id="MobiDB-lite"/>
    </source>
</evidence>
<gene>
    <name evidence="1" type="primary">groES</name>
    <name evidence="1" type="synonym">groS</name>
    <name type="ordered locus">Nther_0449</name>
</gene>
<proteinExistence type="inferred from homology"/>
<sequence>MNLKPLGDRIVIKILEAEEKTESGIVLPEKAKEKPQEGEVVAVGSGKTLDDGSKVEPEVKAGDKVVYSKFAGNEVEVDGEEYLIMRQDDILAVIE</sequence>
<feature type="chain" id="PRO_1000129684" description="Co-chaperonin GroES">
    <location>
        <begin position="1"/>
        <end position="95"/>
    </location>
</feature>
<feature type="region of interest" description="Disordered" evidence="2">
    <location>
        <begin position="36"/>
        <end position="55"/>
    </location>
</feature>
<name>CH10_NATTJ</name>
<organism>
    <name type="scientific">Natranaerobius thermophilus (strain ATCC BAA-1301 / DSM 18059 / JW/NM-WN-LF)</name>
    <dbReference type="NCBI Taxonomy" id="457570"/>
    <lineage>
        <taxon>Bacteria</taxon>
        <taxon>Bacillati</taxon>
        <taxon>Bacillota</taxon>
        <taxon>Clostridia</taxon>
        <taxon>Natranaerobiales</taxon>
        <taxon>Natranaerobiaceae</taxon>
        <taxon>Natranaerobius</taxon>
    </lineage>
</organism>
<accession>B2A5V2</accession>
<protein>
    <recommendedName>
        <fullName evidence="1">Co-chaperonin GroES</fullName>
    </recommendedName>
    <alternativeName>
        <fullName evidence="1">10 kDa chaperonin</fullName>
    </alternativeName>
    <alternativeName>
        <fullName evidence="1">Chaperonin-10</fullName>
        <shortName evidence="1">Cpn10</shortName>
    </alternativeName>
</protein>